<reference key="1">
    <citation type="journal article" date="2007" name="J. Bacteriol.">
        <title>The genome sequence of avian pathogenic Escherichia coli strain O1:K1:H7 shares strong similarities with human extraintestinal pathogenic E. coli genomes.</title>
        <authorList>
            <person name="Johnson T.J."/>
            <person name="Kariyawasam S."/>
            <person name="Wannemuehler Y."/>
            <person name="Mangiamele P."/>
            <person name="Johnson S.J."/>
            <person name="Doetkott C."/>
            <person name="Skyberg J.A."/>
            <person name="Lynne A.M."/>
            <person name="Johnson J.R."/>
            <person name="Nolan L.K."/>
        </authorList>
    </citation>
    <scope>NUCLEOTIDE SEQUENCE [LARGE SCALE GENOMIC DNA]</scope>
</reference>
<evidence type="ECO:0000255" key="1">
    <source>
        <dbReference type="HAMAP-Rule" id="MF_01155"/>
    </source>
</evidence>
<comment type="function">
    <text evidence="1">Interacts with CbpA and inhibits both the DnaJ-like co-chaperone activity and the DNA binding activity of CbpA. Together with CbpA, modulates the activity of the DnaK chaperone system. Does not inhibit the co-chaperone activity of DnaJ.</text>
</comment>
<comment type="similarity">
    <text evidence="1">Belongs to the CbpM family.</text>
</comment>
<accession>A1A9Q6</accession>
<keyword id="KW-1185">Reference proteome</keyword>
<proteinExistence type="inferred from homology"/>
<dbReference type="EMBL" id="CP000468">
    <property type="protein sequence ID" value="ABJ00396.1"/>
    <property type="molecule type" value="Genomic_DNA"/>
</dbReference>
<dbReference type="RefSeq" id="WP_000024569.1">
    <property type="nucleotide sequence ID" value="NZ_CADILS010000016.1"/>
</dbReference>
<dbReference type="SMR" id="A1A9Q6"/>
<dbReference type="KEGG" id="ecv:APECO1_92"/>
<dbReference type="HOGENOM" id="CLU_144710_3_1_6"/>
<dbReference type="Proteomes" id="UP000008216">
    <property type="component" value="Chromosome"/>
</dbReference>
<dbReference type="FunFam" id="1.10.1660.10:FF:000006">
    <property type="entry name" value="Chaperone modulatory protein CbpM"/>
    <property type="match status" value="1"/>
</dbReference>
<dbReference type="Gene3D" id="1.10.1660.10">
    <property type="match status" value="1"/>
</dbReference>
<dbReference type="HAMAP" id="MF_01155">
    <property type="entry name" value="CbpM"/>
    <property type="match status" value="1"/>
</dbReference>
<dbReference type="InterPro" id="IPR022835">
    <property type="entry name" value="CbpM"/>
</dbReference>
<dbReference type="NCBIfam" id="NF007617">
    <property type="entry name" value="PRK10265.1"/>
    <property type="match status" value="1"/>
</dbReference>
<dbReference type="Pfam" id="PF13591">
    <property type="entry name" value="MerR_2"/>
    <property type="match status" value="1"/>
</dbReference>
<organism>
    <name type="scientific">Escherichia coli O1:K1 / APEC</name>
    <dbReference type="NCBI Taxonomy" id="405955"/>
    <lineage>
        <taxon>Bacteria</taxon>
        <taxon>Pseudomonadati</taxon>
        <taxon>Pseudomonadota</taxon>
        <taxon>Gammaproteobacteria</taxon>
        <taxon>Enterobacterales</taxon>
        <taxon>Enterobacteriaceae</taxon>
        <taxon>Escherichia</taxon>
    </lineage>
</organism>
<name>CBPM_ECOK1</name>
<protein>
    <recommendedName>
        <fullName evidence="1">Chaperone modulatory protein CbpM</fullName>
    </recommendedName>
</protein>
<gene>
    <name evidence="1" type="primary">cbpM</name>
    <name type="ordered locus">Ecok1_09020</name>
    <name type="ORF">APECO1_92</name>
</gene>
<sequence length="101" mass="11443">MANVTVTFTITEFCLHTGISEEELNEIVGLGVVEPSEIQETTWVFDDHAAIVVQRAVRLRHELALDWPGIAVALTLMDDIAHLKQENRLLRQRLSRFVAHP</sequence>
<feature type="chain" id="PRO_0000286889" description="Chaperone modulatory protein CbpM">
    <location>
        <begin position="1"/>
        <end position="101"/>
    </location>
</feature>